<gene>
    <name evidence="1" type="primary">dnaA</name>
    <name type="ordered locus">EcolC_0001</name>
</gene>
<feature type="chain" id="PRO_1000079948" description="Chromosomal replication initiator protein DnaA">
    <location>
        <begin position="1"/>
        <end position="467"/>
    </location>
</feature>
<feature type="region of interest" description="Domain I, interacts with DnaA modulators" evidence="1">
    <location>
        <begin position="1"/>
        <end position="90"/>
    </location>
</feature>
<feature type="region of interest" description="Domain II" evidence="1">
    <location>
        <begin position="91"/>
        <end position="130"/>
    </location>
</feature>
<feature type="region of interest" description="Domain III, AAA+ region" evidence="1">
    <location>
        <begin position="131"/>
        <end position="347"/>
    </location>
</feature>
<feature type="region of interest" description="Domain IV, binds dsDNA" evidence="1">
    <location>
        <begin position="348"/>
        <end position="467"/>
    </location>
</feature>
<feature type="binding site" evidence="1">
    <location>
        <position position="175"/>
    </location>
    <ligand>
        <name>ATP</name>
        <dbReference type="ChEBI" id="CHEBI:30616"/>
    </ligand>
</feature>
<feature type="binding site" evidence="1">
    <location>
        <position position="177"/>
    </location>
    <ligand>
        <name>ATP</name>
        <dbReference type="ChEBI" id="CHEBI:30616"/>
    </ligand>
</feature>
<feature type="binding site" evidence="1">
    <location>
        <position position="178"/>
    </location>
    <ligand>
        <name>ATP</name>
        <dbReference type="ChEBI" id="CHEBI:30616"/>
    </ligand>
</feature>
<feature type="binding site" evidence="1">
    <location>
        <position position="179"/>
    </location>
    <ligand>
        <name>ATP</name>
        <dbReference type="ChEBI" id="CHEBI:30616"/>
    </ligand>
</feature>
<comment type="function">
    <text evidence="1">Plays an essential role in the initiation and regulation of chromosomal replication. ATP-DnaA binds to the origin of replication (oriC) to initiate formation of the DNA replication initiation complex once per cell cycle. Binds the DnaA box (a 9 base pair repeat at the origin) and separates the double-stranded (ds)DNA. Forms a right-handed helical filament on oriC DNA; dsDNA binds to the exterior of the filament while single-stranded (ss)DNA is stabiized in the filament's interior. The ATP-DnaA-oriC complex binds and stabilizes one strand of the AT-rich DNA unwinding element (DUE), permitting loading of DNA polymerase. After initiation quickly degrades to an ADP-DnaA complex that is not apt for DNA replication. Binds acidic phospholipids.</text>
</comment>
<comment type="subunit">
    <text evidence="1">Oligomerizes as a right-handed, spiral filament on DNA at oriC.</text>
</comment>
<comment type="subcellular location">
    <subcellularLocation>
        <location evidence="1">Cytoplasm</location>
    </subcellularLocation>
</comment>
<comment type="domain">
    <text evidence="1">Domain I is involved in oligomerization and binding regulators, domain II is flexibile and of varying length in different bacteria, domain III forms the AAA+ region, while domain IV binds dsDNA.</text>
</comment>
<comment type="similarity">
    <text evidence="1">Belongs to the DnaA family.</text>
</comment>
<sequence>MSLSLWQQCLARLQDELPATEFSMWIRPLQAELSDNTLALYAPNRFVLDWVRDKYLNNINGLLTSFCGADAPQLRFEVGTKPVTQTPQAAVTSNVAAPAQVAQTQPQRAAPSMRSGWDNVPAPAEPTYRSNVNVKHTFDNFVEGKSNQLARAAARQVADNPGGAYNPLFLYGGTGLGKTHLLHAVGNGIMARKPNAKVVYMHSERFVQDMVKALQNNAIEEFKRYYRSVDALLIDDIQFFANKERSQEEFFHTFNALLEGNQQIILTSDRYPKEINGVEDRLKSRFGWGLTVAIEPPELETRVAILMKKADENDIRLPGEVAFFIAKRLRSNVRELEGALNRVIANANFTGRAITIDFVREALRDLLALQEKLVTIDNIQKTVAEYYKIKVADLLSKRRSRSVARPRQMAMALAKELTNHSLPEIGDAFGGRDHTTVLHACRKIEQLREESHDIKEDFSNLIRTLSS</sequence>
<evidence type="ECO:0000255" key="1">
    <source>
        <dbReference type="HAMAP-Rule" id="MF_00377"/>
    </source>
</evidence>
<protein>
    <recommendedName>
        <fullName evidence="1">Chromosomal replication initiator protein DnaA</fullName>
    </recommendedName>
</protein>
<accession>B1IYP2</accession>
<dbReference type="EMBL" id="CP000946">
    <property type="protein sequence ID" value="ACA75689.1"/>
    <property type="molecule type" value="Genomic_DNA"/>
</dbReference>
<dbReference type="RefSeq" id="WP_000059104.1">
    <property type="nucleotide sequence ID" value="NZ_MTFT01000013.1"/>
</dbReference>
<dbReference type="BMRB" id="B1IYP2"/>
<dbReference type="SMR" id="B1IYP2"/>
<dbReference type="KEGG" id="ecl:EcolC_0001"/>
<dbReference type="HOGENOM" id="CLU_026910_0_1_6"/>
<dbReference type="GO" id="GO:0005737">
    <property type="term" value="C:cytoplasm"/>
    <property type="evidence" value="ECO:0007669"/>
    <property type="project" value="UniProtKB-SubCell"/>
</dbReference>
<dbReference type="GO" id="GO:0005886">
    <property type="term" value="C:plasma membrane"/>
    <property type="evidence" value="ECO:0007669"/>
    <property type="project" value="TreeGrafter"/>
</dbReference>
<dbReference type="GO" id="GO:0005524">
    <property type="term" value="F:ATP binding"/>
    <property type="evidence" value="ECO:0007669"/>
    <property type="project" value="UniProtKB-UniRule"/>
</dbReference>
<dbReference type="GO" id="GO:0016887">
    <property type="term" value="F:ATP hydrolysis activity"/>
    <property type="evidence" value="ECO:0007669"/>
    <property type="project" value="InterPro"/>
</dbReference>
<dbReference type="GO" id="GO:0003688">
    <property type="term" value="F:DNA replication origin binding"/>
    <property type="evidence" value="ECO:0007669"/>
    <property type="project" value="UniProtKB-UniRule"/>
</dbReference>
<dbReference type="GO" id="GO:0008289">
    <property type="term" value="F:lipid binding"/>
    <property type="evidence" value="ECO:0007669"/>
    <property type="project" value="UniProtKB-KW"/>
</dbReference>
<dbReference type="GO" id="GO:0006270">
    <property type="term" value="P:DNA replication initiation"/>
    <property type="evidence" value="ECO:0007669"/>
    <property type="project" value="UniProtKB-UniRule"/>
</dbReference>
<dbReference type="GO" id="GO:0006275">
    <property type="term" value="P:regulation of DNA replication"/>
    <property type="evidence" value="ECO:0007669"/>
    <property type="project" value="UniProtKB-UniRule"/>
</dbReference>
<dbReference type="CDD" id="cd00009">
    <property type="entry name" value="AAA"/>
    <property type="match status" value="1"/>
</dbReference>
<dbReference type="CDD" id="cd06571">
    <property type="entry name" value="Bac_DnaA_C"/>
    <property type="match status" value="1"/>
</dbReference>
<dbReference type="FunFam" id="1.10.1750.10:FF:000001">
    <property type="entry name" value="Chromosomal replication initiator protein DnaA"/>
    <property type="match status" value="1"/>
</dbReference>
<dbReference type="FunFam" id="1.10.8.60:FF:000003">
    <property type="entry name" value="Chromosomal replication initiator protein DnaA"/>
    <property type="match status" value="1"/>
</dbReference>
<dbReference type="FunFam" id="3.30.300.180:FF:000001">
    <property type="entry name" value="Chromosomal replication initiator protein DnaA"/>
    <property type="match status" value="1"/>
</dbReference>
<dbReference type="FunFam" id="3.40.50.300:FF:000103">
    <property type="entry name" value="Chromosomal replication initiator protein DnaA"/>
    <property type="match status" value="1"/>
</dbReference>
<dbReference type="Gene3D" id="1.10.1750.10">
    <property type="match status" value="1"/>
</dbReference>
<dbReference type="Gene3D" id="1.10.8.60">
    <property type="match status" value="1"/>
</dbReference>
<dbReference type="Gene3D" id="3.30.300.180">
    <property type="match status" value="1"/>
</dbReference>
<dbReference type="Gene3D" id="3.40.50.300">
    <property type="entry name" value="P-loop containing nucleotide triphosphate hydrolases"/>
    <property type="match status" value="1"/>
</dbReference>
<dbReference type="HAMAP" id="MF_00377">
    <property type="entry name" value="DnaA_bact"/>
    <property type="match status" value="1"/>
</dbReference>
<dbReference type="InterPro" id="IPR003593">
    <property type="entry name" value="AAA+_ATPase"/>
</dbReference>
<dbReference type="InterPro" id="IPR001957">
    <property type="entry name" value="Chromosome_initiator_DnaA"/>
</dbReference>
<dbReference type="InterPro" id="IPR020591">
    <property type="entry name" value="Chromosome_initiator_DnaA-like"/>
</dbReference>
<dbReference type="InterPro" id="IPR018312">
    <property type="entry name" value="Chromosome_initiator_DnaA_CS"/>
</dbReference>
<dbReference type="InterPro" id="IPR013159">
    <property type="entry name" value="DnaA_C"/>
</dbReference>
<dbReference type="InterPro" id="IPR013317">
    <property type="entry name" value="DnaA_dom"/>
</dbReference>
<dbReference type="InterPro" id="IPR024633">
    <property type="entry name" value="DnaA_N_dom"/>
</dbReference>
<dbReference type="InterPro" id="IPR038454">
    <property type="entry name" value="DnaA_N_sf"/>
</dbReference>
<dbReference type="InterPro" id="IPR027417">
    <property type="entry name" value="P-loop_NTPase"/>
</dbReference>
<dbReference type="InterPro" id="IPR010921">
    <property type="entry name" value="Trp_repressor/repl_initiator"/>
</dbReference>
<dbReference type="NCBIfam" id="TIGR00362">
    <property type="entry name" value="DnaA"/>
    <property type="match status" value="1"/>
</dbReference>
<dbReference type="PANTHER" id="PTHR30050">
    <property type="entry name" value="CHROMOSOMAL REPLICATION INITIATOR PROTEIN DNAA"/>
    <property type="match status" value="1"/>
</dbReference>
<dbReference type="PANTHER" id="PTHR30050:SF2">
    <property type="entry name" value="CHROMOSOMAL REPLICATION INITIATOR PROTEIN DNAA"/>
    <property type="match status" value="1"/>
</dbReference>
<dbReference type="Pfam" id="PF00308">
    <property type="entry name" value="Bac_DnaA"/>
    <property type="match status" value="1"/>
</dbReference>
<dbReference type="Pfam" id="PF08299">
    <property type="entry name" value="Bac_DnaA_C"/>
    <property type="match status" value="1"/>
</dbReference>
<dbReference type="Pfam" id="PF11638">
    <property type="entry name" value="DnaA_N"/>
    <property type="match status" value="1"/>
</dbReference>
<dbReference type="PRINTS" id="PR00051">
    <property type="entry name" value="DNAA"/>
</dbReference>
<dbReference type="SMART" id="SM00382">
    <property type="entry name" value="AAA"/>
    <property type="match status" value="1"/>
</dbReference>
<dbReference type="SMART" id="SM00760">
    <property type="entry name" value="Bac_DnaA_C"/>
    <property type="match status" value="1"/>
</dbReference>
<dbReference type="SUPFAM" id="SSF52540">
    <property type="entry name" value="P-loop containing nucleoside triphosphate hydrolases"/>
    <property type="match status" value="1"/>
</dbReference>
<dbReference type="SUPFAM" id="SSF48295">
    <property type="entry name" value="TrpR-like"/>
    <property type="match status" value="1"/>
</dbReference>
<dbReference type="PROSITE" id="PS01008">
    <property type="entry name" value="DNAA"/>
    <property type="match status" value="1"/>
</dbReference>
<name>DNAA_ECOLC</name>
<proteinExistence type="inferred from homology"/>
<reference key="1">
    <citation type="submission" date="2008-02" db="EMBL/GenBank/DDBJ databases">
        <title>Complete sequence of Escherichia coli C str. ATCC 8739.</title>
        <authorList>
            <person name="Copeland A."/>
            <person name="Lucas S."/>
            <person name="Lapidus A."/>
            <person name="Glavina del Rio T."/>
            <person name="Dalin E."/>
            <person name="Tice H."/>
            <person name="Bruce D."/>
            <person name="Goodwin L."/>
            <person name="Pitluck S."/>
            <person name="Kiss H."/>
            <person name="Brettin T."/>
            <person name="Detter J.C."/>
            <person name="Han C."/>
            <person name="Kuske C.R."/>
            <person name="Schmutz J."/>
            <person name="Larimer F."/>
            <person name="Land M."/>
            <person name="Hauser L."/>
            <person name="Kyrpides N."/>
            <person name="Mikhailova N."/>
            <person name="Ingram L."/>
            <person name="Richardson P."/>
        </authorList>
    </citation>
    <scope>NUCLEOTIDE SEQUENCE [LARGE SCALE GENOMIC DNA]</scope>
    <source>
        <strain>ATCC 8739 / DSM 1576 / NBRC 3972 / NCIMB 8545 / WDCM 00012 / Crooks</strain>
    </source>
</reference>
<organism>
    <name type="scientific">Escherichia coli (strain ATCC 8739 / DSM 1576 / NBRC 3972 / NCIMB 8545 / WDCM 00012 / Crooks)</name>
    <dbReference type="NCBI Taxonomy" id="481805"/>
    <lineage>
        <taxon>Bacteria</taxon>
        <taxon>Pseudomonadati</taxon>
        <taxon>Pseudomonadota</taxon>
        <taxon>Gammaproteobacteria</taxon>
        <taxon>Enterobacterales</taxon>
        <taxon>Enterobacteriaceae</taxon>
        <taxon>Escherichia</taxon>
    </lineage>
</organism>
<keyword id="KW-0067">ATP-binding</keyword>
<keyword id="KW-0963">Cytoplasm</keyword>
<keyword id="KW-0235">DNA replication</keyword>
<keyword id="KW-0238">DNA-binding</keyword>
<keyword id="KW-0446">Lipid-binding</keyword>
<keyword id="KW-0547">Nucleotide-binding</keyword>